<name>FAC17_MYCBO</name>
<proteinExistence type="inferred from homology"/>
<keyword id="KW-0067">ATP-binding</keyword>
<keyword id="KW-0276">Fatty acid metabolism</keyword>
<keyword id="KW-0436">Ligase</keyword>
<keyword id="KW-0443">Lipid metabolism</keyword>
<keyword id="KW-0547">Nucleotide-binding</keyword>
<keyword id="KW-1185">Reference proteome</keyword>
<gene>
    <name type="primary">fadD17</name>
    <name type="ordered locus">BQ2027_MB3536</name>
</gene>
<organism>
    <name type="scientific">Mycobacterium bovis (strain ATCC BAA-935 / AF2122/97)</name>
    <dbReference type="NCBI Taxonomy" id="233413"/>
    <lineage>
        <taxon>Bacteria</taxon>
        <taxon>Bacillati</taxon>
        <taxon>Actinomycetota</taxon>
        <taxon>Actinomycetes</taxon>
        <taxon>Mycobacteriales</taxon>
        <taxon>Mycobacteriaceae</taxon>
        <taxon>Mycobacterium</taxon>
        <taxon>Mycobacterium tuberculosis complex</taxon>
    </lineage>
</organism>
<protein>
    <recommendedName>
        <fullName>Medium/long-chain-fatty-acid--CoA ligase FadD17</fullName>
        <shortName>FACL</shortName>
        <ecNumber evidence="1">6.2.1.2</ecNumber>
        <ecNumber evidence="1">6.2.1.3</ecNumber>
    </recommendedName>
    <alternativeName>
        <fullName>Acyl-CoA synthetase</fullName>
    </alternativeName>
</protein>
<reference key="1">
    <citation type="journal article" date="2003" name="Proc. Natl. Acad. Sci. U.S.A.">
        <title>The complete genome sequence of Mycobacterium bovis.</title>
        <authorList>
            <person name="Garnier T."/>
            <person name="Eiglmeier K."/>
            <person name="Camus J.-C."/>
            <person name="Medina N."/>
            <person name="Mansoor H."/>
            <person name="Pryor M."/>
            <person name="Duthoy S."/>
            <person name="Grondin S."/>
            <person name="Lacroix C."/>
            <person name="Monsempe C."/>
            <person name="Simon S."/>
            <person name="Harris B."/>
            <person name="Atkin R."/>
            <person name="Doggett J."/>
            <person name="Mayes R."/>
            <person name="Keating L."/>
            <person name="Wheeler P.R."/>
            <person name="Parkhill J."/>
            <person name="Barrell B.G."/>
            <person name="Cole S.T."/>
            <person name="Gordon S.V."/>
            <person name="Hewinson R.G."/>
        </authorList>
    </citation>
    <scope>NUCLEOTIDE SEQUENCE [LARGE SCALE GENOMIC DNA]</scope>
    <source>
        <strain>ATCC BAA-935 / AF2122/97</strain>
    </source>
</reference>
<reference key="2">
    <citation type="journal article" date="2017" name="Genome Announc.">
        <title>Updated reference genome sequence and annotation of Mycobacterium bovis AF2122/97.</title>
        <authorList>
            <person name="Malone K.M."/>
            <person name="Farrell D."/>
            <person name="Stuber T.P."/>
            <person name="Schubert O.T."/>
            <person name="Aebersold R."/>
            <person name="Robbe-Austerman S."/>
            <person name="Gordon S.V."/>
        </authorList>
    </citation>
    <scope>NUCLEOTIDE SEQUENCE [LARGE SCALE GENOMIC DNA]</scope>
    <scope>GENOME REANNOTATION</scope>
    <source>
        <strain>ATCC BAA-935 / AF2122/97</strain>
    </source>
</reference>
<sequence>MTPTHPTVTELLLPLSEIDDRGVYFEDSFTSWRDHIRHGAAIAAALRERLDPARPPHVGVLLQNTPFFSATLVAGALSGIVPVGLNPVRRGAALAGDIAKADCQLVLTGSGSAEVPADVEHINVDSPEWTDEVAAHRDTEVRFRSADLADLFMLIFTSGTSGDPKAVKCSHRKVAIAGVTITQRFSLGRDDVCYVSMPLFHSNAVLVGWAVAAACQGSMALRRKFSASQFLADVRRYGATYANYVGKPLSYVLATPELPDDADNPLRAVYGNEGVPGDIDRFGRRFGCVVMDGFGSTEGGVAITRTLDTPAGALGPLPGGIQIVDPDTGEPCPTGVVGELVNTAGPGGFEGYYNDEAAEAERMAGGVYHSGDLAYRDDAGYAYFAGRLGDWMRVDGENLGTAPIERVLMRYPDATEVAVYPVPDPVVGDQVMAALVLAPGTKFDADKFRAFLTEQPDLGHKQWPSYVRVSAGLPRTMTFKVIKRQLSAEGVACADPVWPIRR</sequence>
<evidence type="ECO:0000250" key="1">
    <source>
        <dbReference type="UniProtKB" id="O53551"/>
    </source>
</evidence>
<evidence type="ECO:0000305" key="2"/>
<dbReference type="EC" id="6.2.1.2" evidence="1"/>
<dbReference type="EC" id="6.2.1.3" evidence="1"/>
<dbReference type="EMBL" id="LT708304">
    <property type="protein sequence ID" value="SIU02163.1"/>
    <property type="molecule type" value="Genomic_DNA"/>
</dbReference>
<dbReference type="RefSeq" id="NP_857175.1">
    <property type="nucleotide sequence ID" value="NC_002945.3"/>
</dbReference>
<dbReference type="RefSeq" id="WP_003901655.1">
    <property type="nucleotide sequence ID" value="NC_002945.4"/>
</dbReference>
<dbReference type="SMR" id="Q7TWC5"/>
<dbReference type="KEGG" id="mbo:BQ2027_MB3536"/>
<dbReference type="PATRIC" id="fig|233413.5.peg.3875"/>
<dbReference type="UniPathway" id="UPA00094"/>
<dbReference type="Proteomes" id="UP000001419">
    <property type="component" value="Chromosome"/>
</dbReference>
<dbReference type="GO" id="GO:0005886">
    <property type="term" value="C:plasma membrane"/>
    <property type="evidence" value="ECO:0007669"/>
    <property type="project" value="TreeGrafter"/>
</dbReference>
<dbReference type="GO" id="GO:0005524">
    <property type="term" value="F:ATP binding"/>
    <property type="evidence" value="ECO:0007669"/>
    <property type="project" value="UniProtKB-KW"/>
</dbReference>
<dbReference type="GO" id="GO:0005324">
    <property type="term" value="F:long-chain fatty acid transmembrane transporter activity"/>
    <property type="evidence" value="ECO:0007669"/>
    <property type="project" value="TreeGrafter"/>
</dbReference>
<dbReference type="GO" id="GO:0004467">
    <property type="term" value="F:long-chain fatty acid-CoA ligase activity"/>
    <property type="evidence" value="ECO:0007669"/>
    <property type="project" value="UniProtKB-EC"/>
</dbReference>
<dbReference type="GO" id="GO:0031956">
    <property type="term" value="F:medium-chain fatty acid-CoA ligase activity"/>
    <property type="evidence" value="ECO:0007669"/>
    <property type="project" value="UniProtKB-EC"/>
</dbReference>
<dbReference type="GO" id="GO:0006633">
    <property type="term" value="P:fatty acid biosynthetic process"/>
    <property type="evidence" value="ECO:0007669"/>
    <property type="project" value="UniProtKB-UniPathway"/>
</dbReference>
<dbReference type="GO" id="GO:0044539">
    <property type="term" value="P:long-chain fatty acid import into cell"/>
    <property type="evidence" value="ECO:0007669"/>
    <property type="project" value="TreeGrafter"/>
</dbReference>
<dbReference type="FunFam" id="3.30.300.30:FF:000034">
    <property type="entry name" value="Fatty-acid-CoA ligase FadD17"/>
    <property type="match status" value="1"/>
</dbReference>
<dbReference type="FunFam" id="3.40.50.12780:FF:000042">
    <property type="entry name" value="Possible fatty-acid-CoA ligase fadD1"/>
    <property type="match status" value="1"/>
</dbReference>
<dbReference type="Gene3D" id="3.30.300.30">
    <property type="match status" value="1"/>
</dbReference>
<dbReference type="Gene3D" id="3.40.50.12780">
    <property type="entry name" value="N-terminal domain of ligase-like"/>
    <property type="match status" value="1"/>
</dbReference>
<dbReference type="InterPro" id="IPR025110">
    <property type="entry name" value="AMP-bd_C"/>
</dbReference>
<dbReference type="InterPro" id="IPR045851">
    <property type="entry name" value="AMP-bd_C_sf"/>
</dbReference>
<dbReference type="InterPro" id="IPR020845">
    <property type="entry name" value="AMP-binding_CS"/>
</dbReference>
<dbReference type="InterPro" id="IPR000873">
    <property type="entry name" value="AMP-dep_synth/lig_dom"/>
</dbReference>
<dbReference type="InterPro" id="IPR042099">
    <property type="entry name" value="ANL_N_sf"/>
</dbReference>
<dbReference type="NCBIfam" id="NF005897">
    <property type="entry name" value="PRK07867.1"/>
    <property type="match status" value="1"/>
</dbReference>
<dbReference type="PANTHER" id="PTHR43107:SF15">
    <property type="entry name" value="FATTY ACID TRANSPORT PROTEIN 3, ISOFORM A"/>
    <property type="match status" value="1"/>
</dbReference>
<dbReference type="PANTHER" id="PTHR43107">
    <property type="entry name" value="LONG-CHAIN FATTY ACID TRANSPORT PROTEIN"/>
    <property type="match status" value="1"/>
</dbReference>
<dbReference type="Pfam" id="PF00501">
    <property type="entry name" value="AMP-binding"/>
    <property type="match status" value="1"/>
</dbReference>
<dbReference type="Pfam" id="PF13193">
    <property type="entry name" value="AMP-binding_C"/>
    <property type="match status" value="1"/>
</dbReference>
<dbReference type="SUPFAM" id="SSF56801">
    <property type="entry name" value="Acetyl-CoA synthetase-like"/>
    <property type="match status" value="1"/>
</dbReference>
<dbReference type="PROSITE" id="PS00455">
    <property type="entry name" value="AMP_BINDING"/>
    <property type="match status" value="1"/>
</dbReference>
<comment type="function">
    <text evidence="1">Catalyzes the activation of medium/long-chain fatty acids as acyl-coenzyme A (acyl-CoA), which are then transferred to the multifunctional polyketide synthase (PKS) type III for further chain extension.</text>
</comment>
<comment type="catalytic activity">
    <reaction evidence="1">
        <text>a medium-chain fatty acid + ATP + CoA = a medium-chain fatty acyl-CoA + AMP + diphosphate</text>
        <dbReference type="Rhea" id="RHEA:48340"/>
        <dbReference type="ChEBI" id="CHEBI:30616"/>
        <dbReference type="ChEBI" id="CHEBI:33019"/>
        <dbReference type="ChEBI" id="CHEBI:57287"/>
        <dbReference type="ChEBI" id="CHEBI:59558"/>
        <dbReference type="ChEBI" id="CHEBI:90546"/>
        <dbReference type="ChEBI" id="CHEBI:456215"/>
        <dbReference type="EC" id="6.2.1.2"/>
    </reaction>
    <physiologicalReaction direction="left-to-right" evidence="1">
        <dbReference type="Rhea" id="RHEA:48341"/>
    </physiologicalReaction>
</comment>
<comment type="catalytic activity">
    <reaction evidence="1">
        <text>a long-chain fatty acid + ATP + CoA = a long-chain fatty acyl-CoA + AMP + diphosphate</text>
        <dbReference type="Rhea" id="RHEA:15421"/>
        <dbReference type="ChEBI" id="CHEBI:30616"/>
        <dbReference type="ChEBI" id="CHEBI:33019"/>
        <dbReference type="ChEBI" id="CHEBI:57287"/>
        <dbReference type="ChEBI" id="CHEBI:57560"/>
        <dbReference type="ChEBI" id="CHEBI:83139"/>
        <dbReference type="ChEBI" id="CHEBI:456215"/>
        <dbReference type="EC" id="6.2.1.3"/>
    </reaction>
    <physiologicalReaction direction="left-to-right" evidence="1">
        <dbReference type="Rhea" id="RHEA:15422"/>
    </physiologicalReaction>
</comment>
<comment type="pathway">
    <text evidence="1">Lipid metabolism; fatty acid biosynthesis.</text>
</comment>
<comment type="similarity">
    <text evidence="2">Belongs to the ATP-dependent AMP-binding enzyme family.</text>
</comment>
<feature type="chain" id="PRO_0000406788" description="Medium/long-chain-fatty-acid--CoA ligase FadD17">
    <location>
        <begin position="1"/>
        <end position="502"/>
    </location>
</feature>
<accession>Q7TWC5</accession>
<accession>A0A1R3Y4B7</accession>
<accession>X2BPR1</accession>